<sequence>MNKTRYRLDVAYDGANFCGWAPQPGLRTVGGLILDALRLICSEPPDIVVAARTDAGVHALQQVCHVDLISSPDPVWLLHRLRSLLKSETDLHILSAVKAPVNFHARFSAIGRRYVYRVIDKRSSWYPQNRYFVYRVNAFLQDYRMRRAASGLIGLKDFGAFCKPRRMGSTVRHLRQFEVIRQPDGQIHFFLESDAFCHSMVRNLVGSLIEVGRGALTLQDLFCYTKIAKRTPKIPTLPPHALTLIGIDYPQEHLFECQNRKTRQKRT</sequence>
<reference key="1">
    <citation type="journal article" date="2003" name="Genome Res.">
        <title>Tropheryma whipplei twist: a human pathogenic Actinobacteria with a reduced genome.</title>
        <authorList>
            <person name="Raoult D."/>
            <person name="Ogata H."/>
            <person name="Audic S."/>
            <person name="Robert C."/>
            <person name="Suhre K."/>
            <person name="Drancourt M."/>
            <person name="Claverie J.-M."/>
        </authorList>
    </citation>
    <scope>NUCLEOTIDE SEQUENCE [LARGE SCALE GENOMIC DNA]</scope>
    <source>
        <strain>Twist</strain>
    </source>
</reference>
<organism>
    <name type="scientific">Tropheryma whipplei (strain Twist)</name>
    <name type="common">Whipple's bacillus</name>
    <dbReference type="NCBI Taxonomy" id="203267"/>
    <lineage>
        <taxon>Bacteria</taxon>
        <taxon>Bacillati</taxon>
        <taxon>Actinomycetota</taxon>
        <taxon>Actinomycetes</taxon>
        <taxon>Micrococcales</taxon>
        <taxon>Tropherymataceae</taxon>
        <taxon>Tropheryma</taxon>
    </lineage>
</organism>
<dbReference type="EC" id="5.4.99.12" evidence="1"/>
<dbReference type="EMBL" id="AE014184">
    <property type="protein sequence ID" value="AAO44623.1"/>
    <property type="status" value="ALT_INIT"/>
    <property type="molecule type" value="Genomic_DNA"/>
</dbReference>
<dbReference type="SMR" id="Q83G11"/>
<dbReference type="STRING" id="203267.TWT_526"/>
<dbReference type="KEGG" id="twh:TWT_526"/>
<dbReference type="eggNOG" id="COG0101">
    <property type="taxonomic scope" value="Bacteria"/>
</dbReference>
<dbReference type="HOGENOM" id="CLU_014673_0_2_11"/>
<dbReference type="OrthoDB" id="9811823at2"/>
<dbReference type="Proteomes" id="UP000002200">
    <property type="component" value="Chromosome"/>
</dbReference>
<dbReference type="GO" id="GO:0003723">
    <property type="term" value="F:RNA binding"/>
    <property type="evidence" value="ECO:0007669"/>
    <property type="project" value="InterPro"/>
</dbReference>
<dbReference type="GO" id="GO:0160147">
    <property type="term" value="F:tRNA pseudouridine(38-40) synthase activity"/>
    <property type="evidence" value="ECO:0007669"/>
    <property type="project" value="UniProtKB-EC"/>
</dbReference>
<dbReference type="GO" id="GO:0031119">
    <property type="term" value="P:tRNA pseudouridine synthesis"/>
    <property type="evidence" value="ECO:0007669"/>
    <property type="project" value="UniProtKB-UniRule"/>
</dbReference>
<dbReference type="CDD" id="cd02570">
    <property type="entry name" value="PseudoU_synth_EcTruA"/>
    <property type="match status" value="1"/>
</dbReference>
<dbReference type="Gene3D" id="3.30.70.660">
    <property type="entry name" value="Pseudouridine synthase I, catalytic domain, C-terminal subdomain"/>
    <property type="match status" value="1"/>
</dbReference>
<dbReference type="Gene3D" id="3.30.70.580">
    <property type="entry name" value="Pseudouridine synthase I, catalytic domain, N-terminal subdomain"/>
    <property type="match status" value="1"/>
</dbReference>
<dbReference type="HAMAP" id="MF_00171">
    <property type="entry name" value="TruA"/>
    <property type="match status" value="1"/>
</dbReference>
<dbReference type="InterPro" id="IPR020103">
    <property type="entry name" value="PsdUridine_synth_cat_dom_sf"/>
</dbReference>
<dbReference type="InterPro" id="IPR001406">
    <property type="entry name" value="PsdUridine_synth_TruA"/>
</dbReference>
<dbReference type="InterPro" id="IPR020097">
    <property type="entry name" value="PsdUridine_synth_TruA_a/b_dom"/>
</dbReference>
<dbReference type="InterPro" id="IPR020095">
    <property type="entry name" value="PsdUridine_synth_TruA_C"/>
</dbReference>
<dbReference type="InterPro" id="IPR020094">
    <property type="entry name" value="TruA/RsuA/RluB/E/F_N"/>
</dbReference>
<dbReference type="PANTHER" id="PTHR11142">
    <property type="entry name" value="PSEUDOURIDYLATE SYNTHASE"/>
    <property type="match status" value="1"/>
</dbReference>
<dbReference type="PANTHER" id="PTHR11142:SF0">
    <property type="entry name" value="TRNA PSEUDOURIDINE SYNTHASE-LIKE 1"/>
    <property type="match status" value="1"/>
</dbReference>
<dbReference type="Pfam" id="PF01416">
    <property type="entry name" value="PseudoU_synth_1"/>
    <property type="match status" value="1"/>
</dbReference>
<dbReference type="PIRSF" id="PIRSF001430">
    <property type="entry name" value="tRNA_psdUrid_synth"/>
    <property type="match status" value="1"/>
</dbReference>
<dbReference type="SUPFAM" id="SSF55120">
    <property type="entry name" value="Pseudouridine synthase"/>
    <property type="match status" value="1"/>
</dbReference>
<keyword id="KW-0413">Isomerase</keyword>
<keyword id="KW-1185">Reference proteome</keyword>
<keyword id="KW-0819">tRNA processing</keyword>
<feature type="chain" id="PRO_0000057481" description="tRNA pseudouridine synthase A">
    <location>
        <begin position="1"/>
        <end position="267"/>
    </location>
</feature>
<feature type="active site" description="Nucleophile" evidence="1">
    <location>
        <position position="54"/>
    </location>
</feature>
<feature type="binding site" evidence="1">
    <location>
        <position position="114"/>
    </location>
    <ligand>
        <name>substrate</name>
    </ligand>
</feature>
<proteinExistence type="inferred from homology"/>
<evidence type="ECO:0000255" key="1">
    <source>
        <dbReference type="HAMAP-Rule" id="MF_00171"/>
    </source>
</evidence>
<evidence type="ECO:0000305" key="2"/>
<gene>
    <name evidence="1" type="primary">truA</name>
    <name type="ordered locus">TWT_526</name>
</gene>
<accession>Q83G11</accession>
<protein>
    <recommendedName>
        <fullName evidence="1">tRNA pseudouridine synthase A</fullName>
        <ecNumber evidence="1">5.4.99.12</ecNumber>
    </recommendedName>
    <alternativeName>
        <fullName evidence="1">tRNA pseudouridine(38-40) synthase</fullName>
    </alternativeName>
    <alternativeName>
        <fullName evidence="1">tRNA pseudouridylate synthase I</fullName>
    </alternativeName>
    <alternativeName>
        <fullName evidence="1">tRNA-uridine isomerase I</fullName>
    </alternativeName>
</protein>
<comment type="function">
    <text evidence="1">Formation of pseudouridine at positions 38, 39 and 40 in the anticodon stem and loop of transfer RNAs.</text>
</comment>
<comment type="catalytic activity">
    <reaction evidence="1">
        <text>uridine(38/39/40) in tRNA = pseudouridine(38/39/40) in tRNA</text>
        <dbReference type="Rhea" id="RHEA:22376"/>
        <dbReference type="Rhea" id="RHEA-COMP:10085"/>
        <dbReference type="Rhea" id="RHEA-COMP:10087"/>
        <dbReference type="ChEBI" id="CHEBI:65314"/>
        <dbReference type="ChEBI" id="CHEBI:65315"/>
        <dbReference type="EC" id="5.4.99.12"/>
    </reaction>
</comment>
<comment type="subunit">
    <text evidence="1">Homodimer.</text>
</comment>
<comment type="similarity">
    <text evidence="1">Belongs to the tRNA pseudouridine synthase TruA family.</text>
</comment>
<comment type="sequence caution" evidence="2">
    <conflict type="erroneous initiation">
        <sequence resource="EMBL-CDS" id="AAO44623"/>
    </conflict>
</comment>
<name>TRUA_TROWT</name>